<protein>
    <recommendedName>
        <fullName evidence="1">DNA repair protein RecO</fullName>
    </recommendedName>
    <alternativeName>
        <fullName evidence="1">Recombination protein O</fullName>
    </alternativeName>
</protein>
<accession>A9N940</accession>
<name>RECO_COXBR</name>
<keyword id="KW-0227">DNA damage</keyword>
<keyword id="KW-0233">DNA recombination</keyword>
<keyword id="KW-0234">DNA repair</keyword>
<comment type="function">
    <text evidence="1">Involved in DNA repair and RecF pathway recombination.</text>
</comment>
<comment type="similarity">
    <text evidence="1">Belongs to the RecO family.</text>
</comment>
<proteinExistence type="inferred from homology"/>
<feature type="chain" id="PRO_1000077728" description="DNA repair protein RecO">
    <location>
        <begin position="1"/>
        <end position="234"/>
    </location>
</feature>
<evidence type="ECO:0000255" key="1">
    <source>
        <dbReference type="HAMAP-Rule" id="MF_00201"/>
    </source>
</evidence>
<reference key="1">
    <citation type="submission" date="2007-11" db="EMBL/GenBank/DDBJ databases">
        <title>Genome sequencing of phylogenetically and phenotypically diverse Coxiella burnetii isolates.</title>
        <authorList>
            <person name="Seshadri R."/>
            <person name="Samuel J.E."/>
        </authorList>
    </citation>
    <scope>NUCLEOTIDE SEQUENCE [LARGE SCALE GENOMIC DNA]</scope>
    <source>
        <strain>RSA 331 / Henzerling II</strain>
    </source>
</reference>
<dbReference type="EMBL" id="CP000890">
    <property type="protein sequence ID" value="ABX78765.1"/>
    <property type="molecule type" value="Genomic_DNA"/>
</dbReference>
<dbReference type="RefSeq" id="WP_012220685.1">
    <property type="nucleotide sequence ID" value="NC_010117.1"/>
</dbReference>
<dbReference type="SMR" id="A9N940"/>
<dbReference type="KEGG" id="cbs:COXBURSA331_A1684"/>
<dbReference type="HOGENOM" id="CLU_066645_1_0_6"/>
<dbReference type="GO" id="GO:0043590">
    <property type="term" value="C:bacterial nucleoid"/>
    <property type="evidence" value="ECO:0007669"/>
    <property type="project" value="TreeGrafter"/>
</dbReference>
<dbReference type="GO" id="GO:0006310">
    <property type="term" value="P:DNA recombination"/>
    <property type="evidence" value="ECO:0007669"/>
    <property type="project" value="UniProtKB-UniRule"/>
</dbReference>
<dbReference type="GO" id="GO:0006302">
    <property type="term" value="P:double-strand break repair"/>
    <property type="evidence" value="ECO:0007669"/>
    <property type="project" value="TreeGrafter"/>
</dbReference>
<dbReference type="Gene3D" id="2.40.50.140">
    <property type="entry name" value="Nucleic acid-binding proteins"/>
    <property type="match status" value="1"/>
</dbReference>
<dbReference type="Gene3D" id="1.20.1440.120">
    <property type="entry name" value="Recombination protein O, C-terminal domain"/>
    <property type="match status" value="1"/>
</dbReference>
<dbReference type="HAMAP" id="MF_00201">
    <property type="entry name" value="RecO"/>
    <property type="match status" value="1"/>
</dbReference>
<dbReference type="InterPro" id="IPR037278">
    <property type="entry name" value="ARFGAP/RecO"/>
</dbReference>
<dbReference type="InterPro" id="IPR022572">
    <property type="entry name" value="DNA_rep/recomb_RecO_N"/>
</dbReference>
<dbReference type="InterPro" id="IPR012340">
    <property type="entry name" value="NA-bd_OB-fold"/>
</dbReference>
<dbReference type="InterPro" id="IPR003717">
    <property type="entry name" value="RecO"/>
</dbReference>
<dbReference type="InterPro" id="IPR042242">
    <property type="entry name" value="RecO_C"/>
</dbReference>
<dbReference type="NCBIfam" id="TIGR00613">
    <property type="entry name" value="reco"/>
    <property type="match status" value="1"/>
</dbReference>
<dbReference type="PANTHER" id="PTHR33991">
    <property type="entry name" value="DNA REPAIR PROTEIN RECO"/>
    <property type="match status" value="1"/>
</dbReference>
<dbReference type="PANTHER" id="PTHR33991:SF1">
    <property type="entry name" value="DNA REPAIR PROTEIN RECO"/>
    <property type="match status" value="1"/>
</dbReference>
<dbReference type="Pfam" id="PF02565">
    <property type="entry name" value="RecO_C"/>
    <property type="match status" value="1"/>
</dbReference>
<dbReference type="Pfam" id="PF11967">
    <property type="entry name" value="RecO_N"/>
    <property type="match status" value="1"/>
</dbReference>
<dbReference type="SUPFAM" id="SSF57863">
    <property type="entry name" value="ArfGap/RecO-like zinc finger"/>
    <property type="match status" value="1"/>
</dbReference>
<dbReference type="SUPFAM" id="SSF50249">
    <property type="entry name" value="Nucleic acid-binding proteins"/>
    <property type="match status" value="1"/>
</dbReference>
<organism>
    <name type="scientific">Coxiella burnetii (strain RSA 331 / Henzerling II)</name>
    <dbReference type="NCBI Taxonomy" id="360115"/>
    <lineage>
        <taxon>Bacteria</taxon>
        <taxon>Pseudomonadati</taxon>
        <taxon>Pseudomonadota</taxon>
        <taxon>Gammaproteobacteria</taxon>
        <taxon>Legionellales</taxon>
        <taxon>Coxiellaceae</taxon>
        <taxon>Coxiella</taxon>
    </lineage>
</organism>
<sequence>MTKRVALEPAFILHRRPYSNTSLILELLTPNHGRVCALARSARGLKSRYKGKLELFSPLLISWSGRSDLKFLGDVEANGMPYLLEGEALLCGFYLNELLIRLLHHDDPYLRLFHHYQNTLEKLVNGRLEATLRCFEKQLLDELGYGLPLSCDVEMKLPFKPDQFYQYLPDRGFLLCEKSEESEERDVFSGKSLLALQEESFSDESSLKEIKYLMRLTLNRLLGKKPLKTRELLF</sequence>
<gene>
    <name evidence="1" type="primary">recO</name>
    <name type="ordered locus">COXBURSA331_A1684</name>
</gene>